<feature type="chain" id="PRO_0000096701" description="2-hydroxychromene-2-carboxylate isomerase">
    <location>
        <begin position="1"/>
        <end position="212"/>
    </location>
</feature>
<feature type="active site" description="Nucleophile" evidence="1">
    <location>
        <position position="24"/>
    </location>
</feature>
<feature type="binding site" evidence="1">
    <location>
        <position position="24"/>
    </location>
    <ligand>
        <name>glutathione</name>
        <dbReference type="ChEBI" id="CHEBI:57925"/>
    </ligand>
</feature>
<feature type="binding site" evidence="1">
    <location>
        <position position="56"/>
    </location>
    <ligand>
        <name>substrate</name>
    </ligand>
</feature>
<feature type="binding site" evidence="1">
    <location>
        <begin position="66"/>
        <end position="67"/>
    </location>
    <ligand>
        <name>substrate</name>
    </ligand>
</feature>
<feature type="binding site" evidence="1">
    <location>
        <position position="97"/>
    </location>
    <ligand>
        <name>substrate</name>
    </ligand>
</feature>
<feature type="binding site" evidence="1">
    <location>
        <position position="181"/>
    </location>
    <ligand>
        <name>glutathione</name>
        <dbReference type="ChEBI" id="CHEBI:57925"/>
    </ligand>
</feature>
<feature type="binding site" evidence="1">
    <location>
        <begin position="192"/>
        <end position="195"/>
    </location>
    <ligand>
        <name>glutathione</name>
        <dbReference type="ChEBI" id="CHEBI:57925"/>
    </ligand>
</feature>
<protein>
    <recommendedName>
        <fullName>2-hydroxychromene-2-carboxylate isomerase</fullName>
        <shortName>HCCA isomerase</shortName>
        <ecNumber>5.99.1.4</ecNumber>
    </recommendedName>
</protein>
<evidence type="ECO:0000250" key="1"/>
<evidence type="ECO:0000305" key="2"/>
<evidence type="ECO:0000305" key="3">
    <source>
    </source>
</evidence>
<geneLocation type="plasmid">
    <name>unnamed</name>
</geneLocation>
<proteinExistence type="inferred from homology"/>
<name>NAHD_PSEU8</name>
<accession>Q52462</accession>
<gene>
    <name type="primary">doxJ</name>
</gene>
<dbReference type="EC" id="5.99.1.4"/>
<dbReference type="EMBL" id="M60405">
    <property type="protein sequence ID" value="AAA16133.2"/>
    <property type="status" value="ALT_INIT"/>
    <property type="molecule type" value="Genomic_DNA"/>
</dbReference>
<dbReference type="PIR" id="I49343">
    <property type="entry name" value="I49343"/>
</dbReference>
<dbReference type="SMR" id="Q52462"/>
<dbReference type="UniPathway" id="UPA00082"/>
<dbReference type="GO" id="GO:0018845">
    <property type="term" value="F:2-hydroxychromene-2-carboxylate isomerase activity"/>
    <property type="evidence" value="ECO:0000250"/>
    <property type="project" value="UniProtKB"/>
</dbReference>
<dbReference type="GO" id="GO:0004602">
    <property type="term" value="F:glutathione peroxidase activity"/>
    <property type="evidence" value="ECO:0007669"/>
    <property type="project" value="TreeGrafter"/>
</dbReference>
<dbReference type="GO" id="GO:0004364">
    <property type="term" value="F:glutathione transferase activity"/>
    <property type="evidence" value="ECO:0007669"/>
    <property type="project" value="TreeGrafter"/>
</dbReference>
<dbReference type="GO" id="GO:0006749">
    <property type="term" value="P:glutathione metabolic process"/>
    <property type="evidence" value="ECO:0007669"/>
    <property type="project" value="TreeGrafter"/>
</dbReference>
<dbReference type="GO" id="GO:1901170">
    <property type="term" value="P:naphthalene catabolic process"/>
    <property type="evidence" value="ECO:0000315"/>
    <property type="project" value="UniProtKB"/>
</dbReference>
<dbReference type="CDD" id="cd03022">
    <property type="entry name" value="DsbA_HCCA_Iso"/>
    <property type="match status" value="1"/>
</dbReference>
<dbReference type="FunFam" id="3.40.30.10:FF:000336">
    <property type="entry name" value="2-hydroxychromene-2-carboxylate isomerase"/>
    <property type="match status" value="1"/>
</dbReference>
<dbReference type="Gene3D" id="3.40.30.10">
    <property type="entry name" value="Glutaredoxin"/>
    <property type="match status" value="1"/>
</dbReference>
<dbReference type="InterPro" id="IPR001853">
    <property type="entry name" value="DSBA-like_thioredoxin_dom"/>
</dbReference>
<dbReference type="InterPro" id="IPR051924">
    <property type="entry name" value="GST_Kappa/NadH"/>
</dbReference>
<dbReference type="InterPro" id="IPR014440">
    <property type="entry name" value="HCCAis_GSTk"/>
</dbReference>
<dbReference type="InterPro" id="IPR044087">
    <property type="entry name" value="NahD-like"/>
</dbReference>
<dbReference type="InterPro" id="IPR036249">
    <property type="entry name" value="Thioredoxin-like_sf"/>
</dbReference>
<dbReference type="PANTHER" id="PTHR42943">
    <property type="entry name" value="GLUTATHIONE S-TRANSFERASE KAPPA"/>
    <property type="match status" value="1"/>
</dbReference>
<dbReference type="PANTHER" id="PTHR42943:SF2">
    <property type="entry name" value="GLUTATHIONE S-TRANSFERASE KAPPA 1"/>
    <property type="match status" value="1"/>
</dbReference>
<dbReference type="Pfam" id="PF01323">
    <property type="entry name" value="DSBA"/>
    <property type="match status" value="1"/>
</dbReference>
<dbReference type="PIRSF" id="PIRSF006386">
    <property type="entry name" value="HCCAis_GSTk"/>
    <property type="match status" value="1"/>
</dbReference>
<dbReference type="SUPFAM" id="SSF52833">
    <property type="entry name" value="Thioredoxin-like"/>
    <property type="match status" value="1"/>
</dbReference>
<keyword id="KW-0058">Aromatic hydrocarbons catabolism</keyword>
<keyword id="KW-0413">Isomerase</keyword>
<keyword id="KW-0614">Plasmid</keyword>
<reference key="1">
    <citation type="journal article" date="1993" name="J. Bacteriol.">
        <title>Metabolism of dibenzothiophene and naphthalene in Pseudomonas strains: complete DNA sequence of an upper naphthalene catabolic pathway.</title>
        <authorList>
            <person name="Denome S.A."/>
            <person name="Stanley D.C."/>
            <person name="Olson E.S."/>
            <person name="Young K.D."/>
        </authorList>
    </citation>
    <scope>NUCLEOTIDE SEQUENCE [GENOMIC DNA]</scope>
    <scope>FUNCTION</scope>
    <source>
        <strain>C18</strain>
        <plasmid>unnamed</plasmid>
    </source>
</reference>
<comment type="function">
    <text evidence="3">Involved in the naphthalene catabolic pathway. Catalyzes the reversible glutathione-dependent isomerization of 2-hydroxychromene-2-carboxylate (HCCA) to trans-O-hydroxybenzylidenepyruvate (THBPA) (Probable).</text>
</comment>
<comment type="catalytic activity">
    <reaction>
        <text>2-hydroxychromene-2-carboxylate = (3E)-4-(2-hydroxyphenyl)-2-oxobut-3-enoate</text>
        <dbReference type="Rhea" id="RHEA:27401"/>
        <dbReference type="ChEBI" id="CHEBI:59350"/>
        <dbReference type="ChEBI" id="CHEBI:59353"/>
        <dbReference type="EC" id="5.99.1.4"/>
    </reaction>
</comment>
<comment type="cofactor">
    <cofactor evidence="1">
        <name>glutathione</name>
        <dbReference type="ChEBI" id="CHEBI:57925"/>
    </cofactor>
</comment>
<comment type="pathway">
    <text>Aromatic compound metabolism; naphthalene degradation.</text>
</comment>
<comment type="miscellaneous">
    <text evidence="3">DoxH and doxJ encode different enzymes that may have interchangeable functions.</text>
</comment>
<comment type="miscellaneous">
    <text evidence="3">Encoded on an unnamed 75 kb plasmid.</text>
</comment>
<comment type="similarity">
    <text evidence="2">Belongs to the GST superfamily. NadH family.</text>
</comment>
<comment type="sequence caution" evidence="2">
    <conflict type="erroneous initiation">
        <sequence resource="EMBL-CDS" id="AAA16133"/>
    </conflict>
    <text>Extended N-terminus.</text>
</comment>
<sequence length="212" mass="24039">MLLCRLLFLECLIVIVDFYFDFLSPFSYLANHRLSKLAQDYGFSIRYYAIDLARVKIAIGNVGPSNRDLIVKLDYLKVDLQRWAELYEIPLVFPANYNSRRMNTGLYYSGAMAQTGAYVNVVFNAVWGDGIAPDLESLPALVSEKLGWDRSAFEDFISSDAATERYDEQTHAAIERKVFGVPTMFLGDEMWWGNDRLFMLENAVGGAPVNGE</sequence>
<organism>
    <name type="scientific">Pseudomonas sp. (strain C18)</name>
    <dbReference type="NCBI Taxonomy" id="69011"/>
    <lineage>
        <taxon>Bacteria</taxon>
        <taxon>Pseudomonadati</taxon>
        <taxon>Pseudomonadota</taxon>
    </lineage>
</organism>